<evidence type="ECO:0000255" key="1">
    <source>
        <dbReference type="HAMAP-Rule" id="MF_01370"/>
    </source>
</evidence>
<sequence length="104" mass="11974">MATIEFSPGIPEVPTQVRLLKSKTGKRGSAIFRFEELKSDTQSILGMRMIDEEGELTTRNIKAKFLNGEFKALEVIYDMETEAEWERFLRFMERFSAANQMGMA</sequence>
<feature type="chain" id="PRO_0000271568" description="Photosystem II reaction center Psb28 protein">
    <location>
        <begin position="1"/>
        <end position="104"/>
    </location>
</feature>
<comment type="subunit">
    <text evidence="1">Part of the photosystem II complex.</text>
</comment>
<comment type="subcellular location">
    <subcellularLocation>
        <location evidence="1">Cellular thylakoid membrane</location>
        <topology evidence="1">Peripheral membrane protein</topology>
        <orientation evidence="1">Cytoplasmic side</orientation>
    </subcellularLocation>
</comment>
<comment type="similarity">
    <text evidence="1">Belongs to the Psb28 family.</text>
</comment>
<gene>
    <name evidence="1" type="primary">psb28</name>
    <name type="ordered locus">CYA_1418</name>
</gene>
<accession>Q2JUM7</accession>
<organism>
    <name type="scientific">Synechococcus sp. (strain JA-3-3Ab)</name>
    <name type="common">Cyanobacteria bacterium Yellowstone A-Prime</name>
    <dbReference type="NCBI Taxonomy" id="321327"/>
    <lineage>
        <taxon>Bacteria</taxon>
        <taxon>Bacillati</taxon>
        <taxon>Cyanobacteriota</taxon>
        <taxon>Cyanophyceae</taxon>
        <taxon>Synechococcales</taxon>
        <taxon>Synechococcaceae</taxon>
        <taxon>Synechococcus</taxon>
    </lineage>
</organism>
<keyword id="KW-0472">Membrane</keyword>
<keyword id="KW-0602">Photosynthesis</keyword>
<keyword id="KW-0604">Photosystem II</keyword>
<keyword id="KW-0793">Thylakoid</keyword>
<reference key="1">
    <citation type="journal article" date="2007" name="ISME J.">
        <title>Population level functional diversity in a microbial community revealed by comparative genomic and metagenomic analyses.</title>
        <authorList>
            <person name="Bhaya D."/>
            <person name="Grossman A.R."/>
            <person name="Steunou A.-S."/>
            <person name="Khuri N."/>
            <person name="Cohan F.M."/>
            <person name="Hamamura N."/>
            <person name="Melendrez M.C."/>
            <person name="Bateson M.M."/>
            <person name="Ward D.M."/>
            <person name="Heidelberg J.F."/>
        </authorList>
    </citation>
    <scope>NUCLEOTIDE SEQUENCE [LARGE SCALE GENOMIC DNA]</scope>
    <source>
        <strain>JA-3-3Ab</strain>
    </source>
</reference>
<protein>
    <recommendedName>
        <fullName evidence="1">Photosystem II reaction center Psb28 protein</fullName>
    </recommendedName>
    <alternativeName>
        <fullName evidence="1">Photosystem II 13 kDa protein</fullName>
    </alternativeName>
    <alternativeName>
        <fullName evidence="1">Photosystem II reaction center W protein</fullName>
    </alternativeName>
</protein>
<proteinExistence type="inferred from homology"/>
<dbReference type="EMBL" id="CP000239">
    <property type="protein sequence ID" value="ABC99587.1"/>
    <property type="molecule type" value="Genomic_DNA"/>
</dbReference>
<dbReference type="RefSeq" id="WP_011430265.1">
    <property type="nucleotide sequence ID" value="NC_007775.1"/>
</dbReference>
<dbReference type="SMR" id="Q2JUM7"/>
<dbReference type="STRING" id="321327.CYA_1418"/>
<dbReference type="KEGG" id="cya:CYA_1418"/>
<dbReference type="eggNOG" id="ENOG5031GDS">
    <property type="taxonomic scope" value="Bacteria"/>
</dbReference>
<dbReference type="HOGENOM" id="CLU_137323_1_0_3"/>
<dbReference type="OrthoDB" id="559598at2"/>
<dbReference type="Proteomes" id="UP000008818">
    <property type="component" value="Chromosome"/>
</dbReference>
<dbReference type="GO" id="GO:0009654">
    <property type="term" value="C:photosystem II oxygen evolving complex"/>
    <property type="evidence" value="ECO:0007669"/>
    <property type="project" value="InterPro"/>
</dbReference>
<dbReference type="GO" id="GO:0031676">
    <property type="term" value="C:plasma membrane-derived thylakoid membrane"/>
    <property type="evidence" value="ECO:0007669"/>
    <property type="project" value="UniProtKB-SubCell"/>
</dbReference>
<dbReference type="GO" id="GO:0015979">
    <property type="term" value="P:photosynthesis"/>
    <property type="evidence" value="ECO:0007669"/>
    <property type="project" value="UniProtKB-UniRule"/>
</dbReference>
<dbReference type="Gene3D" id="2.40.30.220">
    <property type="entry name" value="Photosystem II Psb28"/>
    <property type="match status" value="1"/>
</dbReference>
<dbReference type="HAMAP" id="MF_01370">
    <property type="entry name" value="PSII_Psb28"/>
    <property type="match status" value="1"/>
</dbReference>
<dbReference type="InterPro" id="IPR038676">
    <property type="entry name" value="Psb28_c1_sf"/>
</dbReference>
<dbReference type="InterPro" id="IPR005610">
    <property type="entry name" value="PSII_Psb28_class-1"/>
</dbReference>
<dbReference type="NCBIfam" id="TIGR03047">
    <property type="entry name" value="PS_II_psb28"/>
    <property type="match status" value="1"/>
</dbReference>
<dbReference type="PANTHER" id="PTHR34963">
    <property type="match status" value="1"/>
</dbReference>
<dbReference type="PANTHER" id="PTHR34963:SF2">
    <property type="entry name" value="PHOTOSYSTEM II REACTION CENTER PSB28 PROTEIN, CHLOROPLASTIC"/>
    <property type="match status" value="1"/>
</dbReference>
<dbReference type="Pfam" id="PF03912">
    <property type="entry name" value="Psb28"/>
    <property type="match status" value="1"/>
</dbReference>
<name>PSB28_SYNJA</name>